<evidence type="ECO:0000255" key="1">
    <source>
        <dbReference type="HAMAP-Rule" id="MF_00276"/>
    </source>
</evidence>
<name>KDPC_MYCTU</name>
<reference key="1">
    <citation type="journal article" date="1998" name="Nature">
        <title>Deciphering the biology of Mycobacterium tuberculosis from the complete genome sequence.</title>
        <authorList>
            <person name="Cole S.T."/>
            <person name="Brosch R."/>
            <person name="Parkhill J."/>
            <person name="Garnier T."/>
            <person name="Churcher C.M."/>
            <person name="Harris D.E."/>
            <person name="Gordon S.V."/>
            <person name="Eiglmeier K."/>
            <person name="Gas S."/>
            <person name="Barry C.E. III"/>
            <person name="Tekaia F."/>
            <person name="Badcock K."/>
            <person name="Basham D."/>
            <person name="Brown D."/>
            <person name="Chillingworth T."/>
            <person name="Connor R."/>
            <person name="Davies R.M."/>
            <person name="Devlin K."/>
            <person name="Feltwell T."/>
            <person name="Gentles S."/>
            <person name="Hamlin N."/>
            <person name="Holroyd S."/>
            <person name="Hornsby T."/>
            <person name="Jagels K."/>
            <person name="Krogh A."/>
            <person name="McLean J."/>
            <person name="Moule S."/>
            <person name="Murphy L.D."/>
            <person name="Oliver S."/>
            <person name="Osborne J."/>
            <person name="Quail M.A."/>
            <person name="Rajandream M.A."/>
            <person name="Rogers J."/>
            <person name="Rutter S."/>
            <person name="Seeger K."/>
            <person name="Skelton S."/>
            <person name="Squares S."/>
            <person name="Squares R."/>
            <person name="Sulston J.E."/>
            <person name="Taylor K."/>
            <person name="Whitehead S."/>
            <person name="Barrell B.G."/>
        </authorList>
    </citation>
    <scope>NUCLEOTIDE SEQUENCE [LARGE SCALE GENOMIC DNA]</scope>
    <source>
        <strain>ATCC 25618 / H37Rv</strain>
    </source>
</reference>
<reference key="2">
    <citation type="journal article" date="2011" name="Mol. Cell. Proteomics">
        <title>Proteogenomic analysis of Mycobacterium tuberculosis by high resolution mass spectrometry.</title>
        <authorList>
            <person name="Kelkar D.S."/>
            <person name="Kumar D."/>
            <person name="Kumar P."/>
            <person name="Balakrishnan L."/>
            <person name="Muthusamy B."/>
            <person name="Yadav A.K."/>
            <person name="Shrivastava P."/>
            <person name="Marimuthu A."/>
            <person name="Anand S."/>
            <person name="Sundaram H."/>
            <person name="Kingsbury R."/>
            <person name="Harsha H.C."/>
            <person name="Nair B."/>
            <person name="Prasad T.S."/>
            <person name="Chauhan D.S."/>
            <person name="Katoch K."/>
            <person name="Katoch V.M."/>
            <person name="Kumar P."/>
            <person name="Chaerkady R."/>
            <person name="Ramachandran S."/>
            <person name="Dash D."/>
            <person name="Pandey A."/>
        </authorList>
    </citation>
    <scope>IDENTIFICATION BY MASS SPECTROMETRY [LARGE SCALE ANALYSIS]</scope>
    <source>
        <strain>ATCC 25618 / H37Rv</strain>
    </source>
</reference>
<keyword id="KW-0067">ATP-binding</keyword>
<keyword id="KW-1003">Cell membrane</keyword>
<keyword id="KW-0406">Ion transport</keyword>
<keyword id="KW-0472">Membrane</keyword>
<keyword id="KW-0547">Nucleotide-binding</keyword>
<keyword id="KW-0630">Potassium</keyword>
<keyword id="KW-0633">Potassium transport</keyword>
<keyword id="KW-1185">Reference proteome</keyword>
<keyword id="KW-0812">Transmembrane</keyword>
<keyword id="KW-1133">Transmembrane helix</keyword>
<keyword id="KW-0813">Transport</keyword>
<protein>
    <recommendedName>
        <fullName evidence="1">Potassium-transporting ATPase KdpC subunit</fullName>
    </recommendedName>
    <alternativeName>
        <fullName evidence="1">ATP phosphohydrolase [potassium-transporting] C chain</fullName>
    </alternativeName>
    <alternativeName>
        <fullName evidence="1">Potassium-binding and translocating subunit C</fullName>
    </alternativeName>
    <alternativeName>
        <fullName evidence="1">Potassium-translocating ATPase C chain</fullName>
    </alternativeName>
</protein>
<sequence length="189" mass="20028">MRRQLLPALTMLLVFTVITGIVYPLAVTGVGQLFFGDQANGALLERDGQVIGSAHIGQQFTAAKYFHPRPSSAGDGYDAAASSGSNLGPTNEKLLAAVAERVTAYRKENNLPADTLVPVDAVTGSGSGLDPAISVVNAKLQAPRVAQARNISIRQVERLIEDHTDARGLGFLGERAVNVLRLNLALDRL</sequence>
<accession>P9WKF1</accession>
<accession>L0T8F2</accession>
<accession>P65211</accession>
<accession>P96369</accession>
<dbReference type="EMBL" id="AL123456">
    <property type="protein sequence ID" value="CCP43782.1"/>
    <property type="molecule type" value="Genomic_DNA"/>
</dbReference>
<dbReference type="PIR" id="B70624">
    <property type="entry name" value="B70624"/>
</dbReference>
<dbReference type="RefSeq" id="NP_215547.1">
    <property type="nucleotide sequence ID" value="NC_000962.3"/>
</dbReference>
<dbReference type="RefSeq" id="WP_003405322.1">
    <property type="nucleotide sequence ID" value="NZ_NVQJ01000018.1"/>
</dbReference>
<dbReference type="SMR" id="P9WKF1"/>
<dbReference type="FunCoup" id="P9WKF1">
    <property type="interactions" value="57"/>
</dbReference>
<dbReference type="STRING" id="83332.Rv1031"/>
<dbReference type="PaxDb" id="83332-Rv1031"/>
<dbReference type="DNASU" id="886008"/>
<dbReference type="GeneID" id="886008"/>
<dbReference type="KEGG" id="mtu:Rv1031"/>
<dbReference type="KEGG" id="mtv:RVBD_1031"/>
<dbReference type="TubercuList" id="Rv1031"/>
<dbReference type="eggNOG" id="COG2156">
    <property type="taxonomic scope" value="Bacteria"/>
</dbReference>
<dbReference type="InParanoid" id="P9WKF1"/>
<dbReference type="OrthoDB" id="9788285at2"/>
<dbReference type="PhylomeDB" id="P9WKF1"/>
<dbReference type="Proteomes" id="UP000001584">
    <property type="component" value="Chromosome"/>
</dbReference>
<dbReference type="GO" id="GO:0005886">
    <property type="term" value="C:plasma membrane"/>
    <property type="evidence" value="ECO:0007669"/>
    <property type="project" value="UniProtKB-SubCell"/>
</dbReference>
<dbReference type="GO" id="GO:0005524">
    <property type="term" value="F:ATP binding"/>
    <property type="evidence" value="ECO:0007669"/>
    <property type="project" value="UniProtKB-UniRule"/>
</dbReference>
<dbReference type="GO" id="GO:0008556">
    <property type="term" value="F:P-type potassium transmembrane transporter activity"/>
    <property type="evidence" value="ECO:0000318"/>
    <property type="project" value="GO_Central"/>
</dbReference>
<dbReference type="GO" id="GO:0071805">
    <property type="term" value="P:potassium ion transmembrane transport"/>
    <property type="evidence" value="ECO:0000318"/>
    <property type="project" value="GO_Central"/>
</dbReference>
<dbReference type="HAMAP" id="MF_00276">
    <property type="entry name" value="KdpC"/>
    <property type="match status" value="1"/>
</dbReference>
<dbReference type="InterPro" id="IPR003820">
    <property type="entry name" value="KdpC"/>
</dbReference>
<dbReference type="NCBIfam" id="TIGR00681">
    <property type="entry name" value="kdpC"/>
    <property type="match status" value="1"/>
</dbReference>
<dbReference type="NCBIfam" id="NF001454">
    <property type="entry name" value="PRK00315.1"/>
    <property type="match status" value="1"/>
</dbReference>
<dbReference type="NCBIfam" id="NF010605">
    <property type="entry name" value="PRK14001.1"/>
    <property type="match status" value="1"/>
</dbReference>
<dbReference type="PANTHER" id="PTHR30042">
    <property type="entry name" value="POTASSIUM-TRANSPORTING ATPASE C CHAIN"/>
    <property type="match status" value="1"/>
</dbReference>
<dbReference type="PANTHER" id="PTHR30042:SF2">
    <property type="entry name" value="POTASSIUM-TRANSPORTING ATPASE KDPC SUBUNIT"/>
    <property type="match status" value="1"/>
</dbReference>
<dbReference type="Pfam" id="PF02669">
    <property type="entry name" value="KdpC"/>
    <property type="match status" value="1"/>
</dbReference>
<dbReference type="PIRSF" id="PIRSF001296">
    <property type="entry name" value="K_ATPase_KdpC"/>
    <property type="match status" value="1"/>
</dbReference>
<comment type="function">
    <text evidence="1">Part of the high-affinity ATP-driven potassium transport (or Kdp) system, which catalyzes the hydrolysis of ATP coupled with the electrogenic transport of potassium into the cytoplasm. This subunit acts as a catalytic chaperone that increases the ATP-binding affinity of the ATP-hydrolyzing subunit KdpB by the formation of a transient KdpB/KdpC/ATP ternary complex.</text>
</comment>
<comment type="subunit">
    <text evidence="1">The system is composed of three essential subunits: KdpA, KdpB and KdpC.</text>
</comment>
<comment type="subcellular location">
    <subcellularLocation>
        <location evidence="1">Cell membrane</location>
        <topology evidence="1">Single-pass membrane protein</topology>
    </subcellularLocation>
</comment>
<comment type="similarity">
    <text evidence="1">Belongs to the KdpC family.</text>
</comment>
<proteinExistence type="evidence at protein level"/>
<organism>
    <name type="scientific">Mycobacterium tuberculosis (strain ATCC 25618 / H37Rv)</name>
    <dbReference type="NCBI Taxonomy" id="83332"/>
    <lineage>
        <taxon>Bacteria</taxon>
        <taxon>Bacillati</taxon>
        <taxon>Actinomycetota</taxon>
        <taxon>Actinomycetes</taxon>
        <taxon>Mycobacteriales</taxon>
        <taxon>Mycobacteriaceae</taxon>
        <taxon>Mycobacterium</taxon>
        <taxon>Mycobacterium tuberculosis complex</taxon>
    </lineage>
</organism>
<feature type="chain" id="PRO_0000196999" description="Potassium-transporting ATPase KdpC subunit">
    <location>
        <begin position="1"/>
        <end position="189"/>
    </location>
</feature>
<feature type="transmembrane region" description="Helical" evidence="1">
    <location>
        <begin position="5"/>
        <end position="25"/>
    </location>
</feature>
<gene>
    <name evidence="1" type="primary">kdpC</name>
    <name type="ordered locus">Rv1031</name>
    <name type="ORF">MTCY10G2.18c</name>
</gene>